<sequence length="546" mass="57937">MAAKDVKFDTDARDRMLRGVNILADAVKVTLGPKGRNVVIDKSFGAPRITKDGVSVAKEIELSDKFENMGAQMVKEVASRTNDEAGDGTTTATVLAQAIIKEGLKAVAAGMNPMDLKRGIDLATAKVVESIKAASRPVNDQHEVAQVGTISANGEAQIGRFIADAMQKVGNEGVITVEENKGLETEVEVVEGMQFDRGYLSPYFVTNADKMTAELEDVFILLHEKKLSSLQPMVPLLESVIQAQRPLLIVAEDVEGEALATLVVNKLRGGLKIAAVKAPGFGDRRKAMLQDIAILTGGQVISEDLGMKLENVTIDMLGRAKKVSINKDNTTIVDGAGEKAEIEARVSQIRTQIEETTSDYDREKLQERVAKLAGGVAVIRVGGMTEVEVKERKDRVDDALNATRAAVQEGIVVGGGVALIQAGKVLDGLTGENPDQNAGITIVRRALEAPLRQIAQNAGVDGSVVAGKVRESDDKAFGFNAQTEEYGDMFKFGVIDPAKVVRTALEDAASVASLLITTEAMIADKPEPKSAPAGGMGGMGGMDGMM</sequence>
<protein>
    <recommendedName>
        <fullName evidence="1">Chaperonin GroEL</fullName>
        <ecNumber evidence="1">5.6.1.7</ecNumber>
    </recommendedName>
    <alternativeName>
        <fullName evidence="1">60 kDa chaperonin</fullName>
    </alternativeName>
    <alternativeName>
        <fullName evidence="1">Chaperonin-60</fullName>
        <shortName evidence="1">Cpn60</shortName>
    </alternativeName>
</protein>
<proteinExistence type="inferred from homology"/>
<name>CH60_RHOPL</name>
<feature type="chain" id="PRO_0000063511" description="Chaperonin GroEL">
    <location>
        <begin position="1"/>
        <end position="546"/>
    </location>
</feature>
<feature type="region of interest" description="Disordered" evidence="2">
    <location>
        <begin position="526"/>
        <end position="546"/>
    </location>
</feature>
<feature type="compositionally biased region" description="Gly residues" evidence="2">
    <location>
        <begin position="534"/>
        <end position="546"/>
    </location>
</feature>
<feature type="binding site" evidence="1">
    <location>
        <begin position="30"/>
        <end position="33"/>
    </location>
    <ligand>
        <name>ATP</name>
        <dbReference type="ChEBI" id="CHEBI:30616"/>
    </ligand>
</feature>
<feature type="binding site" evidence="1">
    <location>
        <position position="51"/>
    </location>
    <ligand>
        <name>ATP</name>
        <dbReference type="ChEBI" id="CHEBI:30616"/>
    </ligand>
</feature>
<feature type="binding site" evidence="1">
    <location>
        <begin position="87"/>
        <end position="91"/>
    </location>
    <ligand>
        <name>ATP</name>
        <dbReference type="ChEBI" id="CHEBI:30616"/>
    </ligand>
</feature>
<feature type="binding site" evidence="1">
    <location>
        <position position="415"/>
    </location>
    <ligand>
        <name>ATP</name>
        <dbReference type="ChEBI" id="CHEBI:30616"/>
    </ligand>
</feature>
<feature type="binding site" evidence="1">
    <location>
        <position position="496"/>
    </location>
    <ligand>
        <name>ATP</name>
        <dbReference type="ChEBI" id="CHEBI:30616"/>
    </ligand>
</feature>
<dbReference type="EC" id="5.6.1.7" evidence="1"/>
<dbReference type="EMBL" id="AF406639">
    <property type="protein sequence ID" value="AAK94943.1"/>
    <property type="molecule type" value="Genomic_DNA"/>
</dbReference>
<dbReference type="SMR" id="Q93MH1"/>
<dbReference type="STRING" id="1421013.GCA_000504425_01515"/>
<dbReference type="GO" id="GO:0005737">
    <property type="term" value="C:cytoplasm"/>
    <property type="evidence" value="ECO:0007669"/>
    <property type="project" value="UniProtKB-SubCell"/>
</dbReference>
<dbReference type="GO" id="GO:0005524">
    <property type="term" value="F:ATP binding"/>
    <property type="evidence" value="ECO:0007669"/>
    <property type="project" value="UniProtKB-UniRule"/>
</dbReference>
<dbReference type="GO" id="GO:0140662">
    <property type="term" value="F:ATP-dependent protein folding chaperone"/>
    <property type="evidence" value="ECO:0007669"/>
    <property type="project" value="InterPro"/>
</dbReference>
<dbReference type="GO" id="GO:0016853">
    <property type="term" value="F:isomerase activity"/>
    <property type="evidence" value="ECO:0007669"/>
    <property type="project" value="UniProtKB-KW"/>
</dbReference>
<dbReference type="GO" id="GO:0051082">
    <property type="term" value="F:unfolded protein binding"/>
    <property type="evidence" value="ECO:0007669"/>
    <property type="project" value="UniProtKB-UniRule"/>
</dbReference>
<dbReference type="GO" id="GO:0042026">
    <property type="term" value="P:protein refolding"/>
    <property type="evidence" value="ECO:0007669"/>
    <property type="project" value="UniProtKB-UniRule"/>
</dbReference>
<dbReference type="CDD" id="cd03344">
    <property type="entry name" value="GroEL"/>
    <property type="match status" value="1"/>
</dbReference>
<dbReference type="FunFam" id="1.10.560.10:FF:000001">
    <property type="entry name" value="60 kDa chaperonin"/>
    <property type="match status" value="1"/>
</dbReference>
<dbReference type="FunFam" id="3.50.7.10:FF:000001">
    <property type="entry name" value="60 kDa chaperonin"/>
    <property type="match status" value="1"/>
</dbReference>
<dbReference type="Gene3D" id="3.50.7.10">
    <property type="entry name" value="GroEL"/>
    <property type="match status" value="1"/>
</dbReference>
<dbReference type="Gene3D" id="1.10.560.10">
    <property type="entry name" value="GroEL-like equatorial domain"/>
    <property type="match status" value="1"/>
</dbReference>
<dbReference type="Gene3D" id="3.30.260.10">
    <property type="entry name" value="TCP-1-like chaperonin intermediate domain"/>
    <property type="match status" value="1"/>
</dbReference>
<dbReference type="HAMAP" id="MF_00600">
    <property type="entry name" value="CH60"/>
    <property type="match status" value="1"/>
</dbReference>
<dbReference type="InterPro" id="IPR018370">
    <property type="entry name" value="Chaperonin_Cpn60_CS"/>
</dbReference>
<dbReference type="InterPro" id="IPR001844">
    <property type="entry name" value="Cpn60/GroEL"/>
</dbReference>
<dbReference type="InterPro" id="IPR002423">
    <property type="entry name" value="Cpn60/GroEL/TCP-1"/>
</dbReference>
<dbReference type="InterPro" id="IPR027409">
    <property type="entry name" value="GroEL-like_apical_dom_sf"/>
</dbReference>
<dbReference type="InterPro" id="IPR027413">
    <property type="entry name" value="GROEL-like_equatorial_sf"/>
</dbReference>
<dbReference type="InterPro" id="IPR027410">
    <property type="entry name" value="TCP-1-like_intermed_sf"/>
</dbReference>
<dbReference type="NCBIfam" id="TIGR02348">
    <property type="entry name" value="GroEL"/>
    <property type="match status" value="1"/>
</dbReference>
<dbReference type="NCBIfam" id="NF000592">
    <property type="entry name" value="PRK00013.1"/>
    <property type="match status" value="1"/>
</dbReference>
<dbReference type="NCBIfam" id="NF009487">
    <property type="entry name" value="PRK12849.1"/>
    <property type="match status" value="1"/>
</dbReference>
<dbReference type="NCBIfam" id="NF009488">
    <property type="entry name" value="PRK12850.1"/>
    <property type="match status" value="1"/>
</dbReference>
<dbReference type="NCBIfam" id="NF009489">
    <property type="entry name" value="PRK12851.1"/>
    <property type="match status" value="1"/>
</dbReference>
<dbReference type="PANTHER" id="PTHR45633">
    <property type="entry name" value="60 KDA HEAT SHOCK PROTEIN, MITOCHONDRIAL"/>
    <property type="match status" value="1"/>
</dbReference>
<dbReference type="Pfam" id="PF00118">
    <property type="entry name" value="Cpn60_TCP1"/>
    <property type="match status" value="1"/>
</dbReference>
<dbReference type="PRINTS" id="PR00298">
    <property type="entry name" value="CHAPERONIN60"/>
</dbReference>
<dbReference type="SUPFAM" id="SSF52029">
    <property type="entry name" value="GroEL apical domain-like"/>
    <property type="match status" value="1"/>
</dbReference>
<dbReference type="SUPFAM" id="SSF48592">
    <property type="entry name" value="GroEL equatorial domain-like"/>
    <property type="match status" value="1"/>
</dbReference>
<dbReference type="SUPFAM" id="SSF54849">
    <property type="entry name" value="GroEL-intermediate domain like"/>
    <property type="match status" value="1"/>
</dbReference>
<dbReference type="PROSITE" id="PS00296">
    <property type="entry name" value="CHAPERONINS_CPN60"/>
    <property type="match status" value="1"/>
</dbReference>
<accession>Q93MH1</accession>
<reference key="1">
    <citation type="submission" date="2001-08" db="EMBL/GenBank/DDBJ databases">
        <title>Cloning and sequencing of the groESL operon of Rhodopseudomonas palustris.</title>
        <authorList>
            <person name="Xiao M."/>
            <person name="Zhu C.R."/>
            <person name="Qian X.M."/>
            <person name="Zheng P."/>
            <person name="Chen Y.Y."/>
        </authorList>
    </citation>
    <scope>NUCLEOTIDE SEQUENCE [GENOMIC DNA]</scope>
</reference>
<gene>
    <name evidence="1" type="primary">groEL</name>
    <name evidence="1" type="synonym">groL</name>
</gene>
<organism>
    <name type="scientific">Rhodopseudomonas palustris</name>
    <dbReference type="NCBI Taxonomy" id="1076"/>
    <lineage>
        <taxon>Bacteria</taxon>
        <taxon>Pseudomonadati</taxon>
        <taxon>Pseudomonadota</taxon>
        <taxon>Alphaproteobacteria</taxon>
        <taxon>Hyphomicrobiales</taxon>
        <taxon>Nitrobacteraceae</taxon>
        <taxon>Rhodopseudomonas</taxon>
    </lineage>
</organism>
<keyword id="KW-0067">ATP-binding</keyword>
<keyword id="KW-0143">Chaperone</keyword>
<keyword id="KW-0963">Cytoplasm</keyword>
<keyword id="KW-0413">Isomerase</keyword>
<keyword id="KW-0547">Nucleotide-binding</keyword>
<evidence type="ECO:0000255" key="1">
    <source>
        <dbReference type="HAMAP-Rule" id="MF_00600"/>
    </source>
</evidence>
<evidence type="ECO:0000256" key="2">
    <source>
        <dbReference type="SAM" id="MobiDB-lite"/>
    </source>
</evidence>
<comment type="function">
    <text evidence="1">Together with its co-chaperonin GroES, plays an essential role in assisting protein folding. The GroEL-GroES system forms a nano-cage that allows encapsulation of the non-native substrate proteins and provides a physical environment optimized to promote and accelerate protein folding.</text>
</comment>
<comment type="catalytic activity">
    <reaction evidence="1">
        <text>ATP + H2O + a folded polypeptide = ADP + phosphate + an unfolded polypeptide.</text>
        <dbReference type="EC" id="5.6.1.7"/>
    </reaction>
</comment>
<comment type="subunit">
    <text evidence="1">Forms a cylinder of 14 subunits composed of two heptameric rings stacked back-to-back. Interacts with the co-chaperonin GroES.</text>
</comment>
<comment type="subcellular location">
    <subcellularLocation>
        <location evidence="1">Cytoplasm</location>
    </subcellularLocation>
</comment>
<comment type="similarity">
    <text evidence="1">Belongs to the chaperonin (HSP60) family.</text>
</comment>